<dbReference type="EMBL" id="AP005321">
    <property type="protein sequence ID" value="BAD28518.1"/>
    <property type="molecule type" value="Genomic_DNA"/>
</dbReference>
<dbReference type="EMBL" id="AP008215">
    <property type="protein sequence ID" value="BAF25034.1"/>
    <property type="molecule type" value="Genomic_DNA"/>
</dbReference>
<dbReference type="EMBL" id="AP014965">
    <property type="status" value="NOT_ANNOTATED_CDS"/>
    <property type="molecule type" value="Genomic_DNA"/>
</dbReference>
<dbReference type="EMBL" id="AK063980">
    <property type="protein sequence ID" value="BAG88943.1"/>
    <property type="molecule type" value="mRNA"/>
</dbReference>
<dbReference type="RefSeq" id="XP_015612619.1">
    <property type="nucleotide sequence ID" value="XM_015757133.1"/>
</dbReference>
<dbReference type="SMR" id="Q6ES52"/>
<dbReference type="FunCoup" id="Q6ES52">
    <property type="interactions" value="770"/>
</dbReference>
<dbReference type="STRING" id="39947.Q6ES52"/>
<dbReference type="PaxDb" id="39947-Q6ES52"/>
<dbReference type="KEGG" id="dosa:Os09g0401200"/>
<dbReference type="KEGG" id="osa:4346999"/>
<dbReference type="eggNOG" id="KOG0907">
    <property type="taxonomic scope" value="Eukaryota"/>
</dbReference>
<dbReference type="eggNOG" id="KOG1308">
    <property type="taxonomic scope" value="Eukaryota"/>
</dbReference>
<dbReference type="HOGENOM" id="CLU_026202_1_0_1"/>
<dbReference type="InParanoid" id="Q6ES52"/>
<dbReference type="OrthoDB" id="2121326at2759"/>
<dbReference type="Proteomes" id="UP000000763">
    <property type="component" value="Chromosome 9"/>
</dbReference>
<dbReference type="Proteomes" id="UP000059680">
    <property type="component" value="Chromosome 9"/>
</dbReference>
<dbReference type="GO" id="GO:0000118">
    <property type="term" value="C:histone deacetylase complex"/>
    <property type="evidence" value="ECO:0000318"/>
    <property type="project" value="GO_Central"/>
</dbReference>
<dbReference type="GO" id="GO:0030544">
    <property type="term" value="F:Hsp70 protein binding"/>
    <property type="evidence" value="ECO:0000318"/>
    <property type="project" value="GO_Central"/>
</dbReference>
<dbReference type="GO" id="GO:0051085">
    <property type="term" value="P:chaperone cofactor-dependent protein refolding"/>
    <property type="evidence" value="ECO:0000318"/>
    <property type="project" value="GO_Central"/>
</dbReference>
<dbReference type="GO" id="GO:0006950">
    <property type="term" value="P:response to stress"/>
    <property type="evidence" value="ECO:0007669"/>
    <property type="project" value="UniProtKB-ARBA"/>
</dbReference>
<dbReference type="CDD" id="cd02947">
    <property type="entry name" value="TRX_family"/>
    <property type="match status" value="1"/>
</dbReference>
<dbReference type="FunFam" id="1.25.40.10:FF:000112">
    <property type="entry name" value="FAM10 family protein"/>
    <property type="match status" value="1"/>
</dbReference>
<dbReference type="FunFam" id="3.40.30.10:FF:000240">
    <property type="entry name" value="TPR repeat-containing thioredoxin TDX"/>
    <property type="match status" value="1"/>
</dbReference>
<dbReference type="Gene3D" id="3.40.30.10">
    <property type="entry name" value="Glutaredoxin"/>
    <property type="match status" value="1"/>
</dbReference>
<dbReference type="Gene3D" id="1.25.40.10">
    <property type="entry name" value="Tetratricopeptide repeat domain"/>
    <property type="match status" value="1"/>
</dbReference>
<dbReference type="InterPro" id="IPR036249">
    <property type="entry name" value="Thioredoxin-like_sf"/>
</dbReference>
<dbReference type="InterPro" id="IPR013766">
    <property type="entry name" value="Thioredoxin_domain"/>
</dbReference>
<dbReference type="InterPro" id="IPR011990">
    <property type="entry name" value="TPR-like_helical_dom_sf"/>
</dbReference>
<dbReference type="InterPro" id="IPR019734">
    <property type="entry name" value="TPR_rpt"/>
</dbReference>
<dbReference type="PANTHER" id="PTHR45883">
    <property type="entry name" value="HSC70-INTERACTING PROTEIN"/>
    <property type="match status" value="1"/>
</dbReference>
<dbReference type="PANTHER" id="PTHR45883:SF7">
    <property type="entry name" value="TPR REPEAT-CONTAINING THIOREDOXIN TDX"/>
    <property type="match status" value="1"/>
</dbReference>
<dbReference type="Pfam" id="PF00085">
    <property type="entry name" value="Thioredoxin"/>
    <property type="match status" value="1"/>
</dbReference>
<dbReference type="Pfam" id="PF13414">
    <property type="entry name" value="TPR_11"/>
    <property type="match status" value="1"/>
</dbReference>
<dbReference type="SMART" id="SM00028">
    <property type="entry name" value="TPR"/>
    <property type="match status" value="3"/>
</dbReference>
<dbReference type="SUPFAM" id="SSF52833">
    <property type="entry name" value="Thioredoxin-like"/>
    <property type="match status" value="1"/>
</dbReference>
<dbReference type="SUPFAM" id="SSF48452">
    <property type="entry name" value="TPR-like"/>
    <property type="match status" value="1"/>
</dbReference>
<dbReference type="PROSITE" id="PS51352">
    <property type="entry name" value="THIOREDOXIN_2"/>
    <property type="match status" value="1"/>
</dbReference>
<dbReference type="PROSITE" id="PS50005">
    <property type="entry name" value="TPR"/>
    <property type="match status" value="3"/>
</dbReference>
<dbReference type="PROSITE" id="PS50293">
    <property type="entry name" value="TPR_REGION"/>
    <property type="match status" value="1"/>
</dbReference>
<gene>
    <name type="ordered locus">Os09g0401200</name>
    <name type="ordered locus">LOC_Os09g23650</name>
    <name type="ORF">P0650H04.34</name>
</gene>
<protein>
    <recommendedName>
        <fullName>TPR repeat-containing thioredoxin TDX</fullName>
    </recommendedName>
    <alternativeName>
        <fullName>OsTrx26</fullName>
    </alternativeName>
    <alternativeName>
        <fullName>Tetratricoredoxin</fullName>
        <shortName>OsTDX</shortName>
    </alternativeName>
</protein>
<evidence type="ECO:0000250" key="1"/>
<evidence type="ECO:0000255" key="2">
    <source>
        <dbReference type="PROSITE-ProRule" id="PRU00691"/>
    </source>
</evidence>
<evidence type="ECO:0000256" key="3">
    <source>
        <dbReference type="SAM" id="MobiDB-lite"/>
    </source>
</evidence>
<evidence type="ECO:0000305" key="4"/>
<accession>Q6ES52</accession>
<comment type="function">
    <text evidence="1">Probable thiol-disulfide oxidoreductase that may participate in various redox reactions and act as chaperone under heat shock. May interact with HSP70 proteins through the TPR repeats (By similarity).</text>
</comment>
<comment type="similarity">
    <text evidence="4">Belongs to the thioredoxin family.</text>
</comment>
<reference key="1">
    <citation type="journal article" date="2005" name="Nature">
        <title>The map-based sequence of the rice genome.</title>
        <authorList>
            <consortium name="International rice genome sequencing project (IRGSP)"/>
        </authorList>
    </citation>
    <scope>NUCLEOTIDE SEQUENCE [LARGE SCALE GENOMIC DNA]</scope>
    <source>
        <strain>cv. Nipponbare</strain>
    </source>
</reference>
<reference key="2">
    <citation type="journal article" date="2008" name="Nucleic Acids Res.">
        <title>The rice annotation project database (RAP-DB): 2008 update.</title>
        <authorList>
            <consortium name="The rice annotation project (RAP)"/>
        </authorList>
    </citation>
    <scope>GENOME REANNOTATION</scope>
    <source>
        <strain>cv. Nipponbare</strain>
    </source>
</reference>
<reference key="3">
    <citation type="journal article" date="2013" name="Rice">
        <title>Improvement of the Oryza sativa Nipponbare reference genome using next generation sequence and optical map data.</title>
        <authorList>
            <person name="Kawahara Y."/>
            <person name="de la Bastide M."/>
            <person name="Hamilton J.P."/>
            <person name="Kanamori H."/>
            <person name="McCombie W.R."/>
            <person name="Ouyang S."/>
            <person name="Schwartz D.C."/>
            <person name="Tanaka T."/>
            <person name="Wu J."/>
            <person name="Zhou S."/>
            <person name="Childs K.L."/>
            <person name="Davidson R.M."/>
            <person name="Lin H."/>
            <person name="Quesada-Ocampo L."/>
            <person name="Vaillancourt B."/>
            <person name="Sakai H."/>
            <person name="Lee S.S."/>
            <person name="Kim J."/>
            <person name="Numa H."/>
            <person name="Itoh T."/>
            <person name="Buell C.R."/>
            <person name="Matsumoto T."/>
        </authorList>
    </citation>
    <scope>GENOME REANNOTATION</scope>
    <source>
        <strain>cv. Nipponbare</strain>
    </source>
</reference>
<reference key="4">
    <citation type="journal article" date="2003" name="Science">
        <title>Collection, mapping, and annotation of over 28,000 cDNA clones from japonica rice.</title>
        <authorList>
            <consortium name="The rice full-length cDNA consortium"/>
        </authorList>
    </citation>
    <scope>NUCLEOTIDE SEQUENCE [LARGE SCALE MRNA]</scope>
    <source>
        <strain>cv. Nipponbare</strain>
    </source>
</reference>
<reference key="5">
    <citation type="journal article" date="2009" name="Mol. Plant">
        <title>Comparative genomic study of the thioredoxin family in photosynthetic organisms with emphasis on Populus trichocarpa.</title>
        <authorList>
            <person name="Chibani K."/>
            <person name="Wingsle G."/>
            <person name="Jacquot J.P."/>
            <person name="Gelhaye E."/>
            <person name="Rouhier N."/>
        </authorList>
    </citation>
    <scope>GENE FAMILY</scope>
    <scope>NOMENCLATURE</scope>
</reference>
<keyword id="KW-1015">Disulfide bond</keyword>
<keyword id="KW-0249">Electron transport</keyword>
<keyword id="KW-0676">Redox-active center</keyword>
<keyword id="KW-1185">Reference proteome</keyword>
<keyword id="KW-0677">Repeat</keyword>
<keyword id="KW-0802">TPR repeat</keyword>
<keyword id="KW-0813">Transport</keyword>
<feature type="chain" id="PRO_0000394847" description="TPR repeat-containing thioredoxin TDX">
    <location>
        <begin position="1"/>
        <end position="317"/>
    </location>
</feature>
<feature type="repeat" description="TPR 1">
    <location>
        <begin position="50"/>
        <end position="83"/>
    </location>
</feature>
<feature type="repeat" description="TPR 2">
    <location>
        <begin position="85"/>
        <end position="117"/>
    </location>
</feature>
<feature type="repeat" description="TPR 3">
    <location>
        <begin position="119"/>
        <end position="151"/>
    </location>
</feature>
<feature type="domain" description="Thioredoxin" evidence="2">
    <location>
        <begin position="189"/>
        <end position="316"/>
    </location>
</feature>
<feature type="region of interest" description="Disordered" evidence="3">
    <location>
        <begin position="1"/>
        <end position="48"/>
    </location>
</feature>
<feature type="compositionally biased region" description="Acidic residues" evidence="3">
    <location>
        <begin position="9"/>
        <end position="29"/>
    </location>
</feature>
<feature type="active site" description="Nucleophile" evidence="1">
    <location>
        <position position="242"/>
    </location>
</feature>
<feature type="active site" description="Nucleophile" evidence="1">
    <location>
        <position position="245"/>
    </location>
</feature>
<feature type="site" description="Contributes to redox potential value" evidence="1">
    <location>
        <position position="243"/>
    </location>
</feature>
<feature type="site" description="Contributes to redox potential value" evidence="1">
    <location>
        <position position="244"/>
    </location>
</feature>
<feature type="disulfide bond" description="Redox-active" evidence="2">
    <location>
        <begin position="242"/>
        <end position="245"/>
    </location>
</feature>
<proteinExistence type="evidence at transcript level"/>
<sequence length="317" mass="34981">MATAGASSFEDEIMESDIELEGEAVEPDNDPPQKMGDPSVEVSDEKRDQAQLCKNKGVDAFSEGKLDEAIEHLTEAIVLNPTSAIAYATRAVIFVKSKKPNAAIRDADAALKINPDSAKGYKSRGMAKAMLGKWEEAAQDLRMAAKLDYDEEIGAELKKVEPNVLKIEEHRKKYERLRKERDIKKAEMEKQRKHAEEVSAASAALKDGDVIAIHSSSELDTKLKAASSLSRLVVLYFTAAWCGPCRFIGPVCKSLAEKHRNVVFLKVDIDELNSVAYRWNVSSVPSFFFVRNGKEIDKVVGADKNGLERKVAQHGSS</sequence>
<name>TDX_ORYSJ</name>
<organism>
    <name type="scientific">Oryza sativa subsp. japonica</name>
    <name type="common">Rice</name>
    <dbReference type="NCBI Taxonomy" id="39947"/>
    <lineage>
        <taxon>Eukaryota</taxon>
        <taxon>Viridiplantae</taxon>
        <taxon>Streptophyta</taxon>
        <taxon>Embryophyta</taxon>
        <taxon>Tracheophyta</taxon>
        <taxon>Spermatophyta</taxon>
        <taxon>Magnoliopsida</taxon>
        <taxon>Liliopsida</taxon>
        <taxon>Poales</taxon>
        <taxon>Poaceae</taxon>
        <taxon>BOP clade</taxon>
        <taxon>Oryzoideae</taxon>
        <taxon>Oryzeae</taxon>
        <taxon>Oryzinae</taxon>
        <taxon>Oryza</taxon>
        <taxon>Oryza sativa</taxon>
    </lineage>
</organism>